<proteinExistence type="evidence at transcript level"/>
<protein>
    <recommendedName>
        <fullName>Wilms tumor protein homolog</fullName>
    </recommendedName>
</protein>
<keyword id="KW-0025">Alternative splicing</keyword>
<keyword id="KW-0963">Cytoplasm</keyword>
<keyword id="KW-0238">DNA-binding</keyword>
<keyword id="KW-1017">Isopeptide bond</keyword>
<keyword id="KW-0479">Metal-binding</keyword>
<keyword id="KW-0539">Nucleus</keyword>
<keyword id="KW-1185">Reference proteome</keyword>
<keyword id="KW-0677">Repeat</keyword>
<keyword id="KW-0691">RNA editing</keyword>
<keyword id="KW-0694">RNA-binding</keyword>
<keyword id="KW-0804">Transcription</keyword>
<keyword id="KW-0805">Transcription regulation</keyword>
<keyword id="KW-0043">Tumor suppressor</keyword>
<keyword id="KW-0832">Ubl conjugation</keyword>
<keyword id="KW-0862">Zinc</keyword>
<keyword id="KW-0863">Zinc-finger</keyword>
<evidence type="ECO:0000250" key="1"/>
<evidence type="ECO:0000250" key="2">
    <source>
        <dbReference type="UniProtKB" id="P19544"/>
    </source>
</evidence>
<evidence type="ECO:0000255" key="3">
    <source>
        <dbReference type="PROSITE-ProRule" id="PRU00042"/>
    </source>
</evidence>
<evidence type="ECO:0000256" key="4">
    <source>
        <dbReference type="SAM" id="MobiDB-lite"/>
    </source>
</evidence>
<evidence type="ECO:0000303" key="5">
    <source>
    </source>
</evidence>
<evidence type="ECO:0000305" key="6"/>
<name>WT1_PIG</name>
<sequence>MGSDVRDLNALLPAVPSLGGGGGCALPVSGAAEWAPVLDFAPPGASAYGSLGGPAPPPAPPPPPPPPPHSFIKQEPSWGGAEPHEEQCLSAFTVHFSGQFTGTAGACRYEPFGPPPPSQASSGQARMFPNAPYLPSCLESQPAIRNQGYSTVTFDGTPSYGHTPSHHAAQFPNHSFKHEDPMGQQGSLGEQQYSVPPPVYGCHTSTDSCTGSQALLLRTPYSSDNLYQMTSQLECMTWNQMNLGATLKGVAAGTSSSMKWTEGQSNHGAGYESDSHATPILCGAQYRIHTHGVFRGIQDVRRVPGVAPTLVRSASETSEKRPFMCAYPGCNKRYFKLSHLQMHSRKHTGEKPYQCDFKDCERRFSRSDQLKRHQRRHTGVKPFQCKTCQRKFSRSDHLKTHTRTHTGKTSEKPFSCRWPSCQKKFARSDELVRHHNMHQRNMSKLQLAL</sequence>
<comment type="function">
    <text evidence="2">Transcription factor that plays an important role in cellular development and cell survival. Recognizes and binds to the DNA sequence 5'-GCG(T/G)GGGCG-3'. Regulates the expression of numerous target genes, including EPO. Plays an essential role for development of the urogenital system. It has a tumor suppressor as well as an oncogenic role in tumor formation. Function may be isoform-specific: isoforms lacking the KTS motif may act as transcription factors. Isoforms containing the KTS motif may bind mRNA and play a role in mRNA metabolism or splicing. Isoform 1 has lower affinity for DNA, and can bind RNA.</text>
</comment>
<comment type="subunit">
    <text evidence="1">Interacts with ZNF224 via the zinc-finger region. Interacts with WTAP, AMER1 and SRY. Homodimer. Interacts with WTIP. Interacts with actively translating polysomes. Detected in nuclear ribonucleoprotein (mRNP) particles. Interacts with U2AF2. Interacts with HNRNPU via the zinc-finger region. Interacts with CITED2. Interacts with RBM4 (By similarity).</text>
</comment>
<comment type="subcellular location">
    <molecule>Isoform 1</molecule>
    <subcellularLocation>
        <location evidence="1">Nucleus speckle</location>
    </subcellularLocation>
</comment>
<comment type="subcellular location">
    <molecule>Isoform 4</molecule>
    <subcellularLocation>
        <location evidence="1">Nucleus</location>
        <location evidence="1">Nucleoplasm</location>
    </subcellularLocation>
</comment>
<comment type="subcellular location">
    <subcellularLocation>
        <location evidence="1">Nucleus</location>
    </subcellularLocation>
    <subcellularLocation>
        <location evidence="1">Nucleus</location>
        <location evidence="1">Nucleolus</location>
    </subcellularLocation>
    <subcellularLocation>
        <location evidence="1">Cytoplasm</location>
    </subcellularLocation>
    <subcellularLocation>
        <location evidence="1">Nucleus speckle</location>
    </subcellularLocation>
    <text evidence="1">Shuttles between nucleus and cytoplasm.</text>
</comment>
<comment type="alternative products">
    <event type="alternative splicing"/>
    <isoform>
        <id>O62651-1</id>
        <name>1</name>
        <sequence type="displayed"/>
    </isoform>
    <isoform>
        <id>O62651-2</id>
        <name>2</name>
        <sequence type="described" ref="VSP_006870 VSP_006871"/>
    </isoform>
    <isoform>
        <id>O62651-3</id>
        <name>3</name>
        <sequence type="described" ref="VSP_006870"/>
    </isoform>
    <isoform>
        <id>O62651-4</id>
        <name>4</name>
        <sequence type="described" ref="VSP_006871"/>
    </isoform>
    <text>Experimental confirmation may be lacking for some isoforms.</text>
</comment>
<comment type="developmental stage">
    <text>Expressed during kidney development.</text>
</comment>
<comment type="domain">
    <text evidence="2">Binds to DNA motifs with the sequence 5'-GCG(T/G)GGGCG-3' via its C2H2-type zinc fingers. Starting from the N-terminus, the second zinc finger binds to the 3'-GCG motif, the middle zinc finger interacts with the central TGG motif, and the C-terminal zinc finger binds to the 5'-GCG motif. Binds double-stranded target DNA, irrespective of the cytosine methylation status. Has reduced affinity for target DNA where the cytosines have been oxidized to 5-hydroxymethylcytosine, 5-formylcytosine or 5-carboxylcytosine.</text>
</comment>
<comment type="domain">
    <text evidence="2">The 9aaTAD motif is a transactivation domain present in a large number of yeast and animal transcription factors.</text>
</comment>
<comment type="RNA editing">
    <location>
        <position position="281" evidence="1"/>
    </location>
    <text evidence="1">Partially edited.</text>
</comment>
<comment type="miscellaneous">
    <text evidence="1">Presence of the KTS motif hinders interactions between DNA and zinc-finger 4.</text>
</comment>
<comment type="similarity">
    <text evidence="6">Belongs to the EGR C2H2-type zinc-finger protein family.</text>
</comment>
<accession>O62651</accession>
<gene>
    <name type="primary">WT1</name>
</gene>
<reference key="1">
    <citation type="journal article" date="1998" name="Gene">
        <title>cDNA cloning and developmental expression of the porcine homologue of WT1.</title>
        <authorList>
            <person name="Tsurutani N."/>
            <person name="Oda H."/>
            <person name="Nakatsuru Y."/>
            <person name="Imai Y."/>
            <person name="Zhang S."/>
            <person name="Ueno Y."/>
            <person name="Ishikawa T."/>
        </authorList>
    </citation>
    <scope>NUCLEOTIDE SEQUENCE [MRNA] (ISOFORMS 1; 2; 3 AND 4)</scope>
    <source>
        <strain>Large white X Duroc</strain>
        <tissue>Kidney</tissue>
    </source>
</reference>
<feature type="chain" id="PRO_0000047133" description="Wilms tumor protein homolog">
    <location>
        <begin position="1"/>
        <end position="449"/>
    </location>
</feature>
<feature type="zinc finger region" description="C2H2-type 1" evidence="3">
    <location>
        <begin position="323"/>
        <end position="347"/>
    </location>
</feature>
<feature type="zinc finger region" description="C2H2-type 2" evidence="3">
    <location>
        <begin position="353"/>
        <end position="377"/>
    </location>
</feature>
<feature type="zinc finger region" description="C2H2-type 3" evidence="3">
    <location>
        <begin position="383"/>
        <end position="405"/>
    </location>
</feature>
<feature type="zinc finger region" description="C2H2-type 4" evidence="3">
    <location>
        <begin position="414"/>
        <end position="438"/>
    </location>
</feature>
<feature type="region of interest" description="Disordered" evidence="4">
    <location>
        <begin position="48"/>
        <end position="84"/>
    </location>
</feature>
<feature type="region of interest" description="Important for interaction with target DNA" evidence="1">
    <location>
        <begin position="367"/>
        <end position="381"/>
    </location>
</feature>
<feature type="region of interest" description="Important for interaction with target DNA" evidence="1">
    <location>
        <begin position="393"/>
        <end position="401"/>
    </location>
</feature>
<feature type="short sequence motif" description="9aaTAD" evidence="2">
    <location>
        <begin position="236"/>
        <end position="244"/>
    </location>
</feature>
<feature type="short sequence motif" description="KTS motif" evidence="1">
    <location>
        <begin position="408"/>
        <end position="410"/>
    </location>
</feature>
<feature type="compositionally biased region" description="Pro residues" evidence="4">
    <location>
        <begin position="54"/>
        <end position="69"/>
    </location>
</feature>
<feature type="site" description="Important for interaction with target DNA" evidence="1">
    <location>
        <position position="424"/>
    </location>
</feature>
<feature type="site" description="Important for interaction with target DNA" evidence="1">
    <location>
        <position position="430"/>
    </location>
</feature>
<feature type="cross-link" description="Glycyl lysine isopeptide (Lys-Gly) (interchain with G-Cter in SUMO)" evidence="1">
    <location>
        <position position="73"/>
    </location>
</feature>
<feature type="cross-link" description="Glycyl lysine isopeptide (Lys-Gly) (interchain with G-Cter in SUMO)" evidence="1">
    <location>
        <position position="177"/>
    </location>
</feature>
<feature type="cross-link" description="Glycyl lysine isopeptide (Lys-Gly) (interchain with G-Cter in SUMO2)" evidence="2">
    <location>
        <position position="444"/>
    </location>
</feature>
<feature type="splice variant" id="VSP_006870" description="In isoform 2 and isoform 3." evidence="5">
    <location>
        <begin position="250"/>
        <end position="266"/>
    </location>
</feature>
<feature type="splice variant" id="VSP_006871" description="In isoform 2 and isoform 4." evidence="5">
    <location>
        <begin position="408"/>
        <end position="410"/>
    </location>
</feature>
<feature type="sequence variant" description="In RNA edited version.">
    <original>L</original>
    <variation>P</variation>
    <location>
        <position position="281"/>
    </location>
</feature>
<dbReference type="EMBL" id="AB010969">
    <property type="protein sequence ID" value="BAA28147.1"/>
    <property type="molecule type" value="mRNA"/>
</dbReference>
<dbReference type="RefSeq" id="NP_001001264.1">
    <property type="nucleotide sequence ID" value="NM_001001264.1"/>
</dbReference>
<dbReference type="BMRB" id="O62651"/>
<dbReference type="SMR" id="O62651"/>
<dbReference type="FunCoup" id="O62651">
    <property type="interactions" value="4"/>
</dbReference>
<dbReference type="STRING" id="9823.ENSSSCP00000019417"/>
<dbReference type="PaxDb" id="9823-ENSSSCP00000019417"/>
<dbReference type="PeptideAtlas" id="O62651"/>
<dbReference type="GeneID" id="397338"/>
<dbReference type="KEGG" id="ssc:397338"/>
<dbReference type="CTD" id="7490"/>
<dbReference type="eggNOG" id="KOG1721">
    <property type="taxonomic scope" value="Eukaryota"/>
</dbReference>
<dbReference type="InParanoid" id="O62651"/>
<dbReference type="OrthoDB" id="8922241at2759"/>
<dbReference type="Proteomes" id="UP000008227">
    <property type="component" value="Unplaced"/>
</dbReference>
<dbReference type="Proteomes" id="UP000314985">
    <property type="component" value="Unplaced"/>
</dbReference>
<dbReference type="Proteomes" id="UP000694570">
    <property type="component" value="Unplaced"/>
</dbReference>
<dbReference type="Proteomes" id="UP000694571">
    <property type="component" value="Unplaced"/>
</dbReference>
<dbReference type="Proteomes" id="UP000694720">
    <property type="component" value="Unplaced"/>
</dbReference>
<dbReference type="Proteomes" id="UP000694722">
    <property type="component" value="Unplaced"/>
</dbReference>
<dbReference type="Proteomes" id="UP000694723">
    <property type="component" value="Unplaced"/>
</dbReference>
<dbReference type="Proteomes" id="UP000694724">
    <property type="component" value="Unplaced"/>
</dbReference>
<dbReference type="Proteomes" id="UP000694725">
    <property type="component" value="Unplaced"/>
</dbReference>
<dbReference type="Proteomes" id="UP000694726">
    <property type="component" value="Unplaced"/>
</dbReference>
<dbReference type="Proteomes" id="UP000694727">
    <property type="component" value="Unplaced"/>
</dbReference>
<dbReference type="Proteomes" id="UP000694728">
    <property type="component" value="Unplaced"/>
</dbReference>
<dbReference type="GO" id="GO:0005737">
    <property type="term" value="C:cytoplasm"/>
    <property type="evidence" value="ECO:0000250"/>
    <property type="project" value="UniProtKB"/>
</dbReference>
<dbReference type="GO" id="GO:0016607">
    <property type="term" value="C:nuclear speck"/>
    <property type="evidence" value="ECO:0000250"/>
    <property type="project" value="UniProtKB"/>
</dbReference>
<dbReference type="GO" id="GO:0005730">
    <property type="term" value="C:nucleolus"/>
    <property type="evidence" value="ECO:0007669"/>
    <property type="project" value="UniProtKB-SubCell"/>
</dbReference>
<dbReference type="GO" id="GO:0005654">
    <property type="term" value="C:nucleoplasm"/>
    <property type="evidence" value="ECO:0000250"/>
    <property type="project" value="UniProtKB"/>
</dbReference>
<dbReference type="GO" id="GO:0005634">
    <property type="term" value="C:nucleus"/>
    <property type="evidence" value="ECO:0000250"/>
    <property type="project" value="UniProtKB"/>
</dbReference>
<dbReference type="GO" id="GO:0070742">
    <property type="term" value="F:C2H2 zinc finger domain binding"/>
    <property type="evidence" value="ECO:0000250"/>
    <property type="project" value="UniProtKB"/>
</dbReference>
<dbReference type="GO" id="GO:0001228">
    <property type="term" value="F:DNA-binding transcription activator activity, RNA polymerase II-specific"/>
    <property type="evidence" value="ECO:0000250"/>
    <property type="project" value="UniProtKB"/>
</dbReference>
<dbReference type="GO" id="GO:0003700">
    <property type="term" value="F:DNA-binding transcription factor activity"/>
    <property type="evidence" value="ECO:0000250"/>
    <property type="project" value="UniProtKB"/>
</dbReference>
<dbReference type="GO" id="GO:0000981">
    <property type="term" value="F:DNA-binding transcription factor activity, RNA polymerase II-specific"/>
    <property type="evidence" value="ECO:0000318"/>
    <property type="project" value="GO_Central"/>
</dbReference>
<dbReference type="GO" id="GO:0010385">
    <property type="term" value="F:double-stranded methylated DNA binding"/>
    <property type="evidence" value="ECO:0000250"/>
    <property type="project" value="UniProtKB"/>
</dbReference>
<dbReference type="GO" id="GO:0044729">
    <property type="term" value="F:hemi-methylated DNA-binding"/>
    <property type="evidence" value="ECO:0000250"/>
    <property type="project" value="UniProtKB"/>
</dbReference>
<dbReference type="GO" id="GO:0003723">
    <property type="term" value="F:RNA binding"/>
    <property type="evidence" value="ECO:0007669"/>
    <property type="project" value="UniProtKB-KW"/>
</dbReference>
<dbReference type="GO" id="GO:0000978">
    <property type="term" value="F:RNA polymerase II cis-regulatory region sequence-specific DNA binding"/>
    <property type="evidence" value="ECO:0000318"/>
    <property type="project" value="GO_Central"/>
</dbReference>
<dbReference type="GO" id="GO:0043565">
    <property type="term" value="F:sequence-specific DNA binding"/>
    <property type="evidence" value="ECO:0000250"/>
    <property type="project" value="UniProtKB"/>
</dbReference>
<dbReference type="GO" id="GO:0000976">
    <property type="term" value="F:transcription cis-regulatory region binding"/>
    <property type="evidence" value="ECO:0000250"/>
    <property type="project" value="UniProtKB"/>
</dbReference>
<dbReference type="GO" id="GO:0008270">
    <property type="term" value="F:zinc ion binding"/>
    <property type="evidence" value="ECO:0000250"/>
    <property type="project" value="UniProtKB"/>
</dbReference>
<dbReference type="GO" id="GO:0035802">
    <property type="term" value="P:adrenal cortex formation"/>
    <property type="evidence" value="ECO:0000250"/>
    <property type="project" value="UniProtKB"/>
</dbReference>
<dbReference type="GO" id="GO:0030325">
    <property type="term" value="P:adrenal gland development"/>
    <property type="evidence" value="ECO:0000250"/>
    <property type="project" value="UniProtKB"/>
</dbReference>
<dbReference type="GO" id="GO:0001658">
    <property type="term" value="P:branching involved in ureteric bud morphogenesis"/>
    <property type="evidence" value="ECO:0000250"/>
    <property type="project" value="UniProtKB"/>
</dbReference>
<dbReference type="GO" id="GO:0043010">
    <property type="term" value="P:camera-type eye development"/>
    <property type="evidence" value="ECO:0000250"/>
    <property type="project" value="UniProtKB"/>
</dbReference>
<dbReference type="GO" id="GO:0071371">
    <property type="term" value="P:cellular response to gonadotropin stimulus"/>
    <property type="evidence" value="ECO:0000250"/>
    <property type="project" value="UniProtKB"/>
</dbReference>
<dbReference type="GO" id="GO:0060539">
    <property type="term" value="P:diaphragm development"/>
    <property type="evidence" value="ECO:0000250"/>
    <property type="project" value="UniProtKB"/>
</dbReference>
<dbReference type="GO" id="GO:0030855">
    <property type="term" value="P:epithelial cell differentiation"/>
    <property type="evidence" value="ECO:0000250"/>
    <property type="project" value="UniProtKB"/>
</dbReference>
<dbReference type="GO" id="GO:0007281">
    <property type="term" value="P:germ cell development"/>
    <property type="evidence" value="ECO:0000250"/>
    <property type="project" value="UniProtKB"/>
</dbReference>
<dbReference type="GO" id="GO:0032836">
    <property type="term" value="P:glomerular basement membrane development"/>
    <property type="evidence" value="ECO:0000250"/>
    <property type="project" value="UniProtKB"/>
</dbReference>
<dbReference type="GO" id="GO:0032835">
    <property type="term" value="P:glomerulus development"/>
    <property type="evidence" value="ECO:0000250"/>
    <property type="project" value="UniProtKB"/>
</dbReference>
<dbReference type="GO" id="GO:0008406">
    <property type="term" value="P:gonad development"/>
    <property type="evidence" value="ECO:0000250"/>
    <property type="project" value="UniProtKB"/>
</dbReference>
<dbReference type="GO" id="GO:0007507">
    <property type="term" value="P:heart development"/>
    <property type="evidence" value="ECO:0000250"/>
    <property type="project" value="UniProtKB"/>
</dbReference>
<dbReference type="GO" id="GO:0030539">
    <property type="term" value="P:male genitalia development"/>
    <property type="evidence" value="ECO:0000250"/>
    <property type="project" value="UniProtKB"/>
</dbReference>
<dbReference type="GO" id="GO:0008584">
    <property type="term" value="P:male gonad development"/>
    <property type="evidence" value="ECO:0000250"/>
    <property type="project" value="UniProtKB"/>
</dbReference>
<dbReference type="GO" id="GO:0060231">
    <property type="term" value="P:mesenchymal to epithelial transition"/>
    <property type="evidence" value="ECO:0000250"/>
    <property type="project" value="UniProtKB"/>
</dbReference>
<dbReference type="GO" id="GO:0072075">
    <property type="term" value="P:metanephric mesenchyme development"/>
    <property type="evidence" value="ECO:0000250"/>
    <property type="project" value="UniProtKB"/>
</dbReference>
<dbReference type="GO" id="GO:0072284">
    <property type="term" value="P:metanephric S-shaped body morphogenesis"/>
    <property type="evidence" value="ECO:0000250"/>
    <property type="project" value="UniProtKB"/>
</dbReference>
<dbReference type="GO" id="GO:0043066">
    <property type="term" value="P:negative regulation of apoptotic process"/>
    <property type="evidence" value="ECO:0000250"/>
    <property type="project" value="UniProtKB"/>
</dbReference>
<dbReference type="GO" id="GO:0030308">
    <property type="term" value="P:negative regulation of cell growth"/>
    <property type="evidence" value="ECO:0000250"/>
    <property type="project" value="UniProtKB"/>
</dbReference>
<dbReference type="GO" id="GO:0008285">
    <property type="term" value="P:negative regulation of cell population proliferation"/>
    <property type="evidence" value="ECO:0000250"/>
    <property type="project" value="UniProtKB"/>
</dbReference>
<dbReference type="GO" id="GO:0045892">
    <property type="term" value="P:negative regulation of DNA-templated transcription"/>
    <property type="evidence" value="ECO:0000250"/>
    <property type="project" value="UniProtKB"/>
</dbReference>
<dbReference type="GO" id="GO:2000195">
    <property type="term" value="P:negative regulation of female gonad development"/>
    <property type="evidence" value="ECO:0000250"/>
    <property type="project" value="UniProtKB"/>
</dbReference>
<dbReference type="GO" id="GO:0072302">
    <property type="term" value="P:negative regulation of metanephric glomerular mesangial cell proliferation"/>
    <property type="evidence" value="ECO:0000250"/>
    <property type="project" value="UniProtKB"/>
</dbReference>
<dbReference type="GO" id="GO:0017148">
    <property type="term" value="P:negative regulation of translation"/>
    <property type="evidence" value="ECO:0000250"/>
    <property type="project" value="UniProtKB"/>
</dbReference>
<dbReference type="GO" id="GO:0072112">
    <property type="term" value="P:podocyte differentiation"/>
    <property type="evidence" value="ECO:0000250"/>
    <property type="project" value="UniProtKB"/>
</dbReference>
<dbReference type="GO" id="GO:0043065">
    <property type="term" value="P:positive regulation of apoptotic process"/>
    <property type="evidence" value="ECO:0000250"/>
    <property type="project" value="UniProtKB"/>
</dbReference>
<dbReference type="GO" id="GO:0045893">
    <property type="term" value="P:positive regulation of DNA-templated transcription"/>
    <property type="evidence" value="ECO:0000250"/>
    <property type="project" value="UniProtKB"/>
</dbReference>
<dbReference type="GO" id="GO:0060421">
    <property type="term" value="P:positive regulation of heart growth"/>
    <property type="evidence" value="ECO:0000250"/>
    <property type="project" value="UniProtKB"/>
</dbReference>
<dbReference type="GO" id="GO:2000020">
    <property type="term" value="P:positive regulation of male gonad development"/>
    <property type="evidence" value="ECO:0000250"/>
    <property type="project" value="UniProtKB"/>
</dbReference>
<dbReference type="GO" id="GO:2001076">
    <property type="term" value="P:positive regulation of metanephric ureteric bud development"/>
    <property type="evidence" value="ECO:0000250"/>
    <property type="project" value="UniProtKB"/>
</dbReference>
<dbReference type="GO" id="GO:0072166">
    <property type="term" value="P:posterior mesonephric tubule development"/>
    <property type="evidence" value="ECO:0000250"/>
    <property type="project" value="UniProtKB"/>
</dbReference>
<dbReference type="GO" id="GO:0003156">
    <property type="term" value="P:regulation of animal organ formation"/>
    <property type="evidence" value="ECO:0000250"/>
    <property type="project" value="UniProtKB"/>
</dbReference>
<dbReference type="GO" id="GO:0006355">
    <property type="term" value="P:regulation of DNA-templated transcription"/>
    <property type="evidence" value="ECO:0000250"/>
    <property type="project" value="UniProtKB"/>
</dbReference>
<dbReference type="GO" id="GO:0006357">
    <property type="term" value="P:regulation of transcription by RNA polymerase II"/>
    <property type="evidence" value="ECO:0000250"/>
    <property type="project" value="UniProtKB"/>
</dbReference>
<dbReference type="GO" id="GO:0008380">
    <property type="term" value="P:RNA splicing"/>
    <property type="evidence" value="ECO:0000250"/>
    <property type="project" value="UniProtKB"/>
</dbReference>
<dbReference type="GO" id="GO:0007530">
    <property type="term" value="P:sex determination"/>
    <property type="evidence" value="ECO:0000250"/>
    <property type="project" value="UniProtKB"/>
</dbReference>
<dbReference type="GO" id="GO:0007356">
    <property type="term" value="P:thorax and anterior abdomen determination"/>
    <property type="evidence" value="ECO:0000250"/>
    <property type="project" value="UniProtKB"/>
</dbReference>
<dbReference type="GO" id="GO:0009888">
    <property type="term" value="P:tissue development"/>
    <property type="evidence" value="ECO:0000250"/>
    <property type="project" value="UniProtKB"/>
</dbReference>
<dbReference type="GO" id="GO:0001657">
    <property type="term" value="P:ureteric bud development"/>
    <property type="evidence" value="ECO:0000250"/>
    <property type="project" value="UniProtKB"/>
</dbReference>
<dbReference type="GO" id="GO:0001570">
    <property type="term" value="P:vasculogenesis"/>
    <property type="evidence" value="ECO:0000250"/>
    <property type="project" value="UniProtKB"/>
</dbReference>
<dbReference type="GO" id="GO:0061032">
    <property type="term" value="P:visceral serous pericardium development"/>
    <property type="evidence" value="ECO:0000250"/>
    <property type="project" value="UniProtKB"/>
</dbReference>
<dbReference type="FunFam" id="3.30.160.60:FF:000018">
    <property type="entry name" value="Krueppel-like factor 15"/>
    <property type="match status" value="1"/>
</dbReference>
<dbReference type="FunFam" id="3.30.160.60:FF:000228">
    <property type="entry name" value="Wilms tumor 1-KTS isoform"/>
    <property type="match status" value="1"/>
</dbReference>
<dbReference type="FunFam" id="3.30.160.60:FF:000241">
    <property type="entry name" value="Wilms tumor 1-KTS isoform"/>
    <property type="match status" value="1"/>
</dbReference>
<dbReference type="FunFam" id="3.30.160.60:FF:000303">
    <property type="entry name" value="Zinc finger protein 41"/>
    <property type="match status" value="1"/>
</dbReference>
<dbReference type="Gene3D" id="3.30.160.60">
    <property type="entry name" value="Classic Zinc Finger"/>
    <property type="match status" value="4"/>
</dbReference>
<dbReference type="InterPro" id="IPR000976">
    <property type="entry name" value="Wilms_tumour_N"/>
</dbReference>
<dbReference type="InterPro" id="IPR036236">
    <property type="entry name" value="Znf_C2H2_sf"/>
</dbReference>
<dbReference type="InterPro" id="IPR013087">
    <property type="entry name" value="Znf_C2H2_type"/>
</dbReference>
<dbReference type="PANTHER" id="PTHR23235:SF65">
    <property type="entry name" value="KRUEPPEL-LIKE FACTOR 11"/>
    <property type="match status" value="1"/>
</dbReference>
<dbReference type="PANTHER" id="PTHR23235">
    <property type="entry name" value="KRUEPPEL-LIKE TRANSCRIPTION FACTOR"/>
    <property type="match status" value="1"/>
</dbReference>
<dbReference type="Pfam" id="PF02165">
    <property type="entry name" value="WT1"/>
    <property type="match status" value="2"/>
</dbReference>
<dbReference type="Pfam" id="PF00096">
    <property type="entry name" value="zf-C2H2"/>
    <property type="match status" value="2"/>
</dbReference>
<dbReference type="PRINTS" id="PR00049">
    <property type="entry name" value="WILMSTUMOUR"/>
</dbReference>
<dbReference type="SMART" id="SM00355">
    <property type="entry name" value="ZnF_C2H2"/>
    <property type="match status" value="4"/>
</dbReference>
<dbReference type="SUPFAM" id="SSF57667">
    <property type="entry name" value="beta-beta-alpha zinc fingers"/>
    <property type="match status" value="2"/>
</dbReference>
<dbReference type="PROSITE" id="PS00028">
    <property type="entry name" value="ZINC_FINGER_C2H2_1"/>
    <property type="match status" value="4"/>
</dbReference>
<dbReference type="PROSITE" id="PS50157">
    <property type="entry name" value="ZINC_FINGER_C2H2_2"/>
    <property type="match status" value="4"/>
</dbReference>
<organism>
    <name type="scientific">Sus scrofa</name>
    <name type="common">Pig</name>
    <dbReference type="NCBI Taxonomy" id="9823"/>
    <lineage>
        <taxon>Eukaryota</taxon>
        <taxon>Metazoa</taxon>
        <taxon>Chordata</taxon>
        <taxon>Craniata</taxon>
        <taxon>Vertebrata</taxon>
        <taxon>Euteleostomi</taxon>
        <taxon>Mammalia</taxon>
        <taxon>Eutheria</taxon>
        <taxon>Laurasiatheria</taxon>
        <taxon>Artiodactyla</taxon>
        <taxon>Suina</taxon>
        <taxon>Suidae</taxon>
        <taxon>Sus</taxon>
    </lineage>
</organism>